<keyword id="KW-0066">ATP synthesis</keyword>
<keyword id="KW-0067">ATP-binding</keyword>
<keyword id="KW-0997">Cell inner membrane</keyword>
<keyword id="KW-1003">Cell membrane</keyword>
<keyword id="KW-0139">CF(1)</keyword>
<keyword id="KW-0375">Hydrogen ion transport</keyword>
<keyword id="KW-0406">Ion transport</keyword>
<keyword id="KW-0472">Membrane</keyword>
<keyword id="KW-0547">Nucleotide-binding</keyword>
<keyword id="KW-1278">Translocase</keyword>
<keyword id="KW-0813">Transport</keyword>
<name>ATPA_NEIM0</name>
<organism>
    <name type="scientific">Neisseria meningitidis serogroup C (strain 053442)</name>
    <dbReference type="NCBI Taxonomy" id="374833"/>
    <lineage>
        <taxon>Bacteria</taxon>
        <taxon>Pseudomonadati</taxon>
        <taxon>Pseudomonadota</taxon>
        <taxon>Betaproteobacteria</taxon>
        <taxon>Neisseriales</taxon>
        <taxon>Neisseriaceae</taxon>
        <taxon>Neisseria</taxon>
    </lineage>
</organism>
<feature type="chain" id="PRO_1000086883" description="ATP synthase subunit alpha">
    <location>
        <begin position="1"/>
        <end position="515"/>
    </location>
</feature>
<feature type="binding site" evidence="1">
    <location>
        <begin position="169"/>
        <end position="176"/>
    </location>
    <ligand>
        <name>ATP</name>
        <dbReference type="ChEBI" id="CHEBI:30616"/>
    </ligand>
</feature>
<feature type="site" description="Required for activity" evidence="1">
    <location>
        <position position="373"/>
    </location>
</feature>
<proteinExistence type="inferred from homology"/>
<comment type="function">
    <text evidence="1">Produces ATP from ADP in the presence of a proton gradient across the membrane. The alpha chain is a regulatory subunit.</text>
</comment>
<comment type="catalytic activity">
    <reaction evidence="1">
        <text>ATP + H2O + 4 H(+)(in) = ADP + phosphate + 5 H(+)(out)</text>
        <dbReference type="Rhea" id="RHEA:57720"/>
        <dbReference type="ChEBI" id="CHEBI:15377"/>
        <dbReference type="ChEBI" id="CHEBI:15378"/>
        <dbReference type="ChEBI" id="CHEBI:30616"/>
        <dbReference type="ChEBI" id="CHEBI:43474"/>
        <dbReference type="ChEBI" id="CHEBI:456216"/>
        <dbReference type="EC" id="7.1.2.2"/>
    </reaction>
</comment>
<comment type="subunit">
    <text evidence="1">F-type ATPases have 2 components, CF(1) - the catalytic core - and CF(0) - the membrane proton channel. CF(1) has five subunits: alpha(3), beta(3), gamma(1), delta(1), epsilon(1). CF(0) has three main subunits: a(1), b(2) and c(9-12). The alpha and beta chains form an alternating ring which encloses part of the gamma chain. CF(1) is attached to CF(0) by a central stalk formed by the gamma and epsilon chains, while a peripheral stalk is formed by the delta and b chains.</text>
</comment>
<comment type="subcellular location">
    <subcellularLocation>
        <location evidence="1">Cell inner membrane</location>
        <topology evidence="1">Peripheral membrane protein</topology>
    </subcellularLocation>
</comment>
<comment type="similarity">
    <text evidence="1">Belongs to the ATPase alpha/beta chains family.</text>
</comment>
<reference key="1">
    <citation type="journal article" date="2008" name="Genomics">
        <title>Characterization of ST-4821 complex, a unique Neisseria meningitidis clone.</title>
        <authorList>
            <person name="Peng J."/>
            <person name="Yang L."/>
            <person name="Yang F."/>
            <person name="Yang J."/>
            <person name="Yan Y."/>
            <person name="Nie H."/>
            <person name="Zhang X."/>
            <person name="Xiong Z."/>
            <person name="Jiang Y."/>
            <person name="Cheng F."/>
            <person name="Xu X."/>
            <person name="Chen S."/>
            <person name="Sun L."/>
            <person name="Li W."/>
            <person name="Shen Y."/>
            <person name="Shao Z."/>
            <person name="Liang X."/>
            <person name="Xu J."/>
            <person name="Jin Q."/>
        </authorList>
    </citation>
    <scope>NUCLEOTIDE SEQUENCE [LARGE SCALE GENOMIC DNA]</scope>
    <source>
        <strain>053442</strain>
    </source>
</reference>
<accession>A9M121</accession>
<dbReference type="EC" id="7.1.2.2" evidence="1"/>
<dbReference type="EMBL" id="CP000381">
    <property type="protein sequence ID" value="ABX72490.1"/>
    <property type="molecule type" value="Genomic_DNA"/>
</dbReference>
<dbReference type="RefSeq" id="WP_002214789.1">
    <property type="nucleotide sequence ID" value="NC_010120.1"/>
</dbReference>
<dbReference type="SMR" id="A9M121"/>
<dbReference type="KEGG" id="nmn:NMCC_0282"/>
<dbReference type="HOGENOM" id="CLU_010091_2_1_4"/>
<dbReference type="Proteomes" id="UP000001177">
    <property type="component" value="Chromosome"/>
</dbReference>
<dbReference type="GO" id="GO:0005886">
    <property type="term" value="C:plasma membrane"/>
    <property type="evidence" value="ECO:0007669"/>
    <property type="project" value="UniProtKB-SubCell"/>
</dbReference>
<dbReference type="GO" id="GO:0045259">
    <property type="term" value="C:proton-transporting ATP synthase complex"/>
    <property type="evidence" value="ECO:0007669"/>
    <property type="project" value="UniProtKB-KW"/>
</dbReference>
<dbReference type="GO" id="GO:0043531">
    <property type="term" value="F:ADP binding"/>
    <property type="evidence" value="ECO:0007669"/>
    <property type="project" value="TreeGrafter"/>
</dbReference>
<dbReference type="GO" id="GO:0005524">
    <property type="term" value="F:ATP binding"/>
    <property type="evidence" value="ECO:0007669"/>
    <property type="project" value="UniProtKB-UniRule"/>
</dbReference>
<dbReference type="GO" id="GO:0046933">
    <property type="term" value="F:proton-transporting ATP synthase activity, rotational mechanism"/>
    <property type="evidence" value="ECO:0007669"/>
    <property type="project" value="UniProtKB-UniRule"/>
</dbReference>
<dbReference type="CDD" id="cd18113">
    <property type="entry name" value="ATP-synt_F1_alpha_C"/>
    <property type="match status" value="1"/>
</dbReference>
<dbReference type="CDD" id="cd18116">
    <property type="entry name" value="ATP-synt_F1_alpha_N"/>
    <property type="match status" value="1"/>
</dbReference>
<dbReference type="CDD" id="cd01132">
    <property type="entry name" value="F1-ATPase_alpha_CD"/>
    <property type="match status" value="1"/>
</dbReference>
<dbReference type="FunFam" id="1.20.150.20:FF:000001">
    <property type="entry name" value="ATP synthase subunit alpha"/>
    <property type="match status" value="1"/>
</dbReference>
<dbReference type="FunFam" id="2.40.30.20:FF:000001">
    <property type="entry name" value="ATP synthase subunit alpha"/>
    <property type="match status" value="1"/>
</dbReference>
<dbReference type="FunFam" id="3.40.50.300:FF:000002">
    <property type="entry name" value="ATP synthase subunit alpha"/>
    <property type="match status" value="1"/>
</dbReference>
<dbReference type="Gene3D" id="2.40.30.20">
    <property type="match status" value="1"/>
</dbReference>
<dbReference type="Gene3D" id="1.20.150.20">
    <property type="entry name" value="ATP synthase alpha/beta chain, C-terminal domain"/>
    <property type="match status" value="1"/>
</dbReference>
<dbReference type="Gene3D" id="3.40.50.300">
    <property type="entry name" value="P-loop containing nucleotide triphosphate hydrolases"/>
    <property type="match status" value="1"/>
</dbReference>
<dbReference type="HAMAP" id="MF_01346">
    <property type="entry name" value="ATP_synth_alpha_bact"/>
    <property type="match status" value="1"/>
</dbReference>
<dbReference type="InterPro" id="IPR023366">
    <property type="entry name" value="ATP_synth_asu-like_sf"/>
</dbReference>
<dbReference type="InterPro" id="IPR000793">
    <property type="entry name" value="ATP_synth_asu_C"/>
</dbReference>
<dbReference type="InterPro" id="IPR038376">
    <property type="entry name" value="ATP_synth_asu_C_sf"/>
</dbReference>
<dbReference type="InterPro" id="IPR033732">
    <property type="entry name" value="ATP_synth_F1_a_nt-bd_dom"/>
</dbReference>
<dbReference type="InterPro" id="IPR005294">
    <property type="entry name" value="ATP_synth_F1_asu"/>
</dbReference>
<dbReference type="InterPro" id="IPR020003">
    <property type="entry name" value="ATPase_a/bsu_AS"/>
</dbReference>
<dbReference type="InterPro" id="IPR004100">
    <property type="entry name" value="ATPase_F1/V1/A1_a/bsu_N"/>
</dbReference>
<dbReference type="InterPro" id="IPR036121">
    <property type="entry name" value="ATPase_F1/V1/A1_a/bsu_N_sf"/>
</dbReference>
<dbReference type="InterPro" id="IPR000194">
    <property type="entry name" value="ATPase_F1/V1/A1_a/bsu_nucl-bd"/>
</dbReference>
<dbReference type="InterPro" id="IPR027417">
    <property type="entry name" value="P-loop_NTPase"/>
</dbReference>
<dbReference type="NCBIfam" id="TIGR00962">
    <property type="entry name" value="atpA"/>
    <property type="match status" value="1"/>
</dbReference>
<dbReference type="NCBIfam" id="NF009884">
    <property type="entry name" value="PRK13343.1"/>
    <property type="match status" value="1"/>
</dbReference>
<dbReference type="PANTHER" id="PTHR48082">
    <property type="entry name" value="ATP SYNTHASE SUBUNIT ALPHA, MITOCHONDRIAL"/>
    <property type="match status" value="1"/>
</dbReference>
<dbReference type="PANTHER" id="PTHR48082:SF2">
    <property type="entry name" value="ATP SYNTHASE SUBUNIT ALPHA, MITOCHONDRIAL"/>
    <property type="match status" value="1"/>
</dbReference>
<dbReference type="Pfam" id="PF00006">
    <property type="entry name" value="ATP-synt_ab"/>
    <property type="match status" value="1"/>
</dbReference>
<dbReference type="Pfam" id="PF00306">
    <property type="entry name" value="ATP-synt_ab_C"/>
    <property type="match status" value="1"/>
</dbReference>
<dbReference type="Pfam" id="PF02874">
    <property type="entry name" value="ATP-synt_ab_N"/>
    <property type="match status" value="1"/>
</dbReference>
<dbReference type="PIRSF" id="PIRSF039088">
    <property type="entry name" value="F_ATPase_subunit_alpha"/>
    <property type="match status" value="1"/>
</dbReference>
<dbReference type="SUPFAM" id="SSF47917">
    <property type="entry name" value="C-terminal domain of alpha and beta subunits of F1 ATP synthase"/>
    <property type="match status" value="1"/>
</dbReference>
<dbReference type="SUPFAM" id="SSF50615">
    <property type="entry name" value="N-terminal domain of alpha and beta subunits of F1 ATP synthase"/>
    <property type="match status" value="1"/>
</dbReference>
<dbReference type="SUPFAM" id="SSF52540">
    <property type="entry name" value="P-loop containing nucleoside triphosphate hydrolases"/>
    <property type="match status" value="1"/>
</dbReference>
<dbReference type="PROSITE" id="PS00152">
    <property type="entry name" value="ATPASE_ALPHA_BETA"/>
    <property type="match status" value="1"/>
</dbReference>
<protein>
    <recommendedName>
        <fullName evidence="1">ATP synthase subunit alpha</fullName>
        <ecNumber evidence="1">7.1.2.2</ecNumber>
    </recommendedName>
    <alternativeName>
        <fullName evidence="1">ATP synthase F1 sector subunit alpha</fullName>
    </alternativeName>
    <alternativeName>
        <fullName evidence="1">F-ATPase subunit alpha</fullName>
    </alternativeName>
</protein>
<sequence>MQLNPAEISDLIKAKIENLSVNAEVRTRGTVISVTDGIVRIHGLSDAMQGEMLEFPGNTFGLAMNLERDSVGAVVLGEYEHIKEGDTVTCTGRILEVPVGRELVGRVVDALGRPIDGKGPINTTLTAPIEKIAPGVIARKSVDQPMQTGLKAIDSMVPVGRGQRELIIGDRQTGKTAVALDAIVNQKGTGVICIYVAIGQKASSIANVVRKLEEHGAMEHTIVVAATASEAAALQYIAPYSGCTMGEFFRDRGEDALIVYDDLSKQAVAYRQISLLLRRPPGREAYPGDVFYLHSRLLERAARVNEHEVEKLTNGEVKGKTGSLTALPIIETQAGDVSAFVPTNVISITDGQIFLETDLFNAGIRPAINAGISVSRVGGAAQTKVIKKLGGGIRLALAQYRELAAFSQFASDLDEATRKQLEHGEVVTELMKQKQFSTLNTAEMALTLWAINNGSYSDVPVAKALAFESEFLSFVRTQHPEVLEAVNASGAMSDESEKTLEAAMKSFKSSYAYQA</sequence>
<evidence type="ECO:0000255" key="1">
    <source>
        <dbReference type="HAMAP-Rule" id="MF_01346"/>
    </source>
</evidence>
<gene>
    <name evidence="1" type="primary">atpA</name>
    <name type="ordered locus">NMCC_0282</name>
</gene>